<organism>
    <name type="scientific">Escherichia coli (strain K12)</name>
    <dbReference type="NCBI Taxonomy" id="83333"/>
    <lineage>
        <taxon>Bacteria</taxon>
        <taxon>Pseudomonadati</taxon>
        <taxon>Pseudomonadota</taxon>
        <taxon>Gammaproteobacteria</taxon>
        <taxon>Enterobacterales</taxon>
        <taxon>Enterobacteriaceae</taxon>
        <taxon>Escherichia</taxon>
    </lineage>
</organism>
<dbReference type="EMBL" id="X04711">
    <property type="protein sequence ID" value="CAA28418.1"/>
    <property type="molecule type" value="Genomic_DNA"/>
</dbReference>
<dbReference type="EMBL" id="U00096">
    <property type="protein sequence ID" value="AAC73161.1"/>
    <property type="molecule type" value="Genomic_DNA"/>
</dbReference>
<dbReference type="EMBL" id="AP009048">
    <property type="protein sequence ID" value="BAB96618.1"/>
    <property type="molecule type" value="Genomic_DNA"/>
</dbReference>
<dbReference type="PIR" id="A30273">
    <property type="entry name" value="BVECAG"/>
</dbReference>
<dbReference type="RefSeq" id="NP_414592.1">
    <property type="nucleotide sequence ID" value="NC_000913.3"/>
</dbReference>
<dbReference type="RefSeq" id="WP_000610901.1">
    <property type="nucleotide sequence ID" value="NZ_STEB01000010.1"/>
</dbReference>
<dbReference type="SMR" id="P62672"/>
<dbReference type="BioGRID" id="4261011">
    <property type="interactions" value="3"/>
</dbReference>
<dbReference type="FunCoup" id="P62672">
    <property type="interactions" value="13"/>
</dbReference>
<dbReference type="STRING" id="511145.b0050"/>
<dbReference type="jPOST" id="P62672"/>
<dbReference type="PaxDb" id="511145-b0050"/>
<dbReference type="EnsemblBacteria" id="AAC73161">
    <property type="protein sequence ID" value="AAC73161"/>
    <property type="gene ID" value="b0050"/>
</dbReference>
<dbReference type="GeneID" id="93777385"/>
<dbReference type="GeneID" id="944772"/>
<dbReference type="KEGG" id="ecj:JW0049"/>
<dbReference type="KEGG" id="eco:b0050"/>
<dbReference type="KEGG" id="ecoc:C3026_00260"/>
<dbReference type="PATRIC" id="fig|1411691.4.peg.2233"/>
<dbReference type="EchoBASE" id="EB0045"/>
<dbReference type="eggNOG" id="COG2967">
    <property type="taxonomic scope" value="Bacteria"/>
</dbReference>
<dbReference type="HOGENOM" id="CLU_128074_0_0_6"/>
<dbReference type="InParanoid" id="P62672"/>
<dbReference type="OMA" id="MRGEYFC"/>
<dbReference type="OrthoDB" id="9795226at2"/>
<dbReference type="PhylomeDB" id="P62672"/>
<dbReference type="BioCyc" id="EcoCyc:EG10047-MONOMER"/>
<dbReference type="PRO" id="PR:P62672"/>
<dbReference type="Proteomes" id="UP000000625">
    <property type="component" value="Chromosome"/>
</dbReference>
<dbReference type="GO" id="GO:0070987">
    <property type="term" value="P:error-free translesion synthesis"/>
    <property type="evidence" value="ECO:0000318"/>
    <property type="project" value="GO_Central"/>
</dbReference>
<dbReference type="Gene3D" id="2.60.40.1470">
    <property type="entry name" value="ApaG domain"/>
    <property type="match status" value="1"/>
</dbReference>
<dbReference type="HAMAP" id="MF_00791">
    <property type="entry name" value="ApaG"/>
    <property type="match status" value="1"/>
</dbReference>
<dbReference type="InterPro" id="IPR007474">
    <property type="entry name" value="ApaG_domain"/>
</dbReference>
<dbReference type="InterPro" id="IPR036767">
    <property type="entry name" value="ApaG_sf"/>
</dbReference>
<dbReference type="InterPro" id="IPR023065">
    <property type="entry name" value="Uncharacterised_ApaG"/>
</dbReference>
<dbReference type="NCBIfam" id="NF003967">
    <property type="entry name" value="PRK05461.1"/>
    <property type="match status" value="1"/>
</dbReference>
<dbReference type="PANTHER" id="PTHR14289">
    <property type="entry name" value="F-BOX ONLY PROTEIN 3"/>
    <property type="match status" value="1"/>
</dbReference>
<dbReference type="PANTHER" id="PTHR14289:SF16">
    <property type="entry name" value="POLYMERASE DELTA-INTERACTING PROTEIN 2"/>
    <property type="match status" value="1"/>
</dbReference>
<dbReference type="Pfam" id="PF04379">
    <property type="entry name" value="DUF525"/>
    <property type="match status" value="1"/>
</dbReference>
<dbReference type="SUPFAM" id="SSF110069">
    <property type="entry name" value="ApaG-like"/>
    <property type="match status" value="1"/>
</dbReference>
<dbReference type="PROSITE" id="PS51087">
    <property type="entry name" value="APAG"/>
    <property type="match status" value="1"/>
</dbReference>
<feature type="chain" id="PRO_0000197947" description="Protein ApaG">
    <location>
        <begin position="1"/>
        <end position="125"/>
    </location>
</feature>
<feature type="domain" description="ApaG">
    <location>
        <begin position="1"/>
        <end position="125"/>
    </location>
</feature>
<sequence length="125" mass="13867">MINSPRVCIQVQSVYIEAQSSPDNERYVFAYTVTIRNLGRAPVQLLGRYWLITNGNGRETEVQGEGVVGVQPLIAPGEEYQYTSGAIIETPLGTMQGHYEMIDENGVPFSIDIPVFRLAVPTLIH</sequence>
<proteinExistence type="inferred from homology"/>
<gene>
    <name type="primary">apaG</name>
    <name type="ordered locus">b0050</name>
    <name type="ordered locus">JW0049</name>
</gene>
<protein>
    <recommendedName>
        <fullName>Protein ApaG</fullName>
    </recommendedName>
</protein>
<name>APAG_ECOLI</name>
<reference key="1">
    <citation type="journal article" date="1986" name="Mol. Gen. Genet.">
        <title>The gene for Escherichia coli diadenosine tetraphosphatase is located immediately clockwise to folA and forms an operon with ksgA.</title>
        <authorList>
            <person name="Blanchin-Roland S."/>
            <person name="Blanquet S."/>
            <person name="Schmitter J.-M."/>
            <person name="Fayat G."/>
        </authorList>
    </citation>
    <scope>NUCLEOTIDE SEQUENCE [GENOMIC DNA]</scope>
</reference>
<reference key="2">
    <citation type="journal article" date="1992" name="Nucleic Acids Res.">
        <title>Systematic sequencing of the Escherichia coli genome: analysis of the 0-2.4 min region.</title>
        <authorList>
            <person name="Yura T."/>
            <person name="Mori H."/>
            <person name="Nagai H."/>
            <person name="Nagata T."/>
            <person name="Ishihama A."/>
            <person name="Fujita N."/>
            <person name="Isono K."/>
            <person name="Mizobuchi K."/>
            <person name="Nakata A."/>
        </authorList>
    </citation>
    <scope>NUCLEOTIDE SEQUENCE [LARGE SCALE GENOMIC DNA]</scope>
    <source>
        <strain>K12</strain>
    </source>
</reference>
<reference key="3">
    <citation type="journal article" date="1997" name="Science">
        <title>The complete genome sequence of Escherichia coli K-12.</title>
        <authorList>
            <person name="Blattner F.R."/>
            <person name="Plunkett G. III"/>
            <person name="Bloch C.A."/>
            <person name="Perna N.T."/>
            <person name="Burland V."/>
            <person name="Riley M."/>
            <person name="Collado-Vides J."/>
            <person name="Glasner J.D."/>
            <person name="Rode C.K."/>
            <person name="Mayhew G.F."/>
            <person name="Gregor J."/>
            <person name="Davis N.W."/>
            <person name="Kirkpatrick H.A."/>
            <person name="Goeden M.A."/>
            <person name="Rose D.J."/>
            <person name="Mau B."/>
            <person name="Shao Y."/>
        </authorList>
    </citation>
    <scope>NUCLEOTIDE SEQUENCE [LARGE SCALE GENOMIC DNA]</scope>
    <source>
        <strain>K12 / MG1655 / ATCC 47076</strain>
    </source>
</reference>
<reference key="4">
    <citation type="journal article" date="2006" name="Mol. Syst. Biol.">
        <title>Highly accurate genome sequences of Escherichia coli K-12 strains MG1655 and W3110.</title>
        <authorList>
            <person name="Hayashi K."/>
            <person name="Morooka N."/>
            <person name="Yamamoto Y."/>
            <person name="Fujita K."/>
            <person name="Isono K."/>
            <person name="Choi S."/>
            <person name="Ohtsubo E."/>
            <person name="Baba T."/>
            <person name="Wanner B.L."/>
            <person name="Mori H."/>
            <person name="Horiuchi T."/>
        </authorList>
    </citation>
    <scope>NUCLEOTIDE SEQUENCE [LARGE SCALE GENOMIC DNA]</scope>
    <source>
        <strain>K12 / W3110 / ATCC 27325 / DSM 5911</strain>
    </source>
</reference>
<keyword id="KW-1185">Reference proteome</keyword>
<accession>P62672</accession>
<accession>P05636</accession>